<dbReference type="EC" id="6.2.1.-" evidence="7"/>
<dbReference type="EMBL" id="JQ740209">
    <property type="protein sequence ID" value="AGA17924.1"/>
    <property type="molecule type" value="mRNA"/>
</dbReference>
<dbReference type="SMR" id="M4IRL6"/>
<dbReference type="GO" id="GO:0005829">
    <property type="term" value="C:cytosol"/>
    <property type="evidence" value="ECO:0000250"/>
    <property type="project" value="UniProtKB"/>
</dbReference>
<dbReference type="GO" id="GO:0005524">
    <property type="term" value="F:ATP binding"/>
    <property type="evidence" value="ECO:0007669"/>
    <property type="project" value="UniProtKB-KW"/>
</dbReference>
<dbReference type="GO" id="GO:0016405">
    <property type="term" value="F:CoA-ligase activity"/>
    <property type="evidence" value="ECO:0000250"/>
    <property type="project" value="UniProtKB"/>
</dbReference>
<dbReference type="CDD" id="cd05904">
    <property type="entry name" value="4CL"/>
    <property type="match status" value="1"/>
</dbReference>
<dbReference type="FunFam" id="3.30.300.30:FF:000007">
    <property type="entry name" value="4-coumarate--CoA ligase 2"/>
    <property type="match status" value="1"/>
</dbReference>
<dbReference type="FunFam" id="3.40.50.12780:FF:000003">
    <property type="entry name" value="Long-chain-fatty-acid--CoA ligase FadD"/>
    <property type="match status" value="1"/>
</dbReference>
<dbReference type="Gene3D" id="3.30.300.30">
    <property type="match status" value="1"/>
</dbReference>
<dbReference type="Gene3D" id="3.40.50.12780">
    <property type="entry name" value="N-terminal domain of ligase-like"/>
    <property type="match status" value="1"/>
</dbReference>
<dbReference type="InterPro" id="IPR025110">
    <property type="entry name" value="AMP-bd_C"/>
</dbReference>
<dbReference type="InterPro" id="IPR045851">
    <property type="entry name" value="AMP-bd_C_sf"/>
</dbReference>
<dbReference type="InterPro" id="IPR020845">
    <property type="entry name" value="AMP-binding_CS"/>
</dbReference>
<dbReference type="InterPro" id="IPR000873">
    <property type="entry name" value="AMP-dep_synth/lig_dom"/>
</dbReference>
<dbReference type="InterPro" id="IPR042099">
    <property type="entry name" value="ANL_N_sf"/>
</dbReference>
<dbReference type="PANTHER" id="PTHR24096:SF425">
    <property type="entry name" value="4-COUMARATE--COA LIGASE-LIKE 7"/>
    <property type="match status" value="1"/>
</dbReference>
<dbReference type="PANTHER" id="PTHR24096">
    <property type="entry name" value="LONG-CHAIN-FATTY-ACID--COA LIGASE"/>
    <property type="match status" value="1"/>
</dbReference>
<dbReference type="Pfam" id="PF00501">
    <property type="entry name" value="AMP-binding"/>
    <property type="match status" value="1"/>
</dbReference>
<dbReference type="Pfam" id="PF13193">
    <property type="entry name" value="AMP-binding_C"/>
    <property type="match status" value="1"/>
</dbReference>
<dbReference type="SUPFAM" id="SSF56801">
    <property type="entry name" value="Acetyl-CoA synthetase-like"/>
    <property type="match status" value="1"/>
</dbReference>
<dbReference type="PROSITE" id="PS00455">
    <property type="entry name" value="AMP_BINDING"/>
    <property type="match status" value="1"/>
</dbReference>
<gene>
    <name evidence="5" type="primary">CCL7</name>
</gene>
<sequence>MEKSGYGRDGVFRSLRPPLVLPKDHNLSMVSFVFRNSSSYPQKPALIDSDTNETLSFSQFKSMVIKVSHGFLNLGVQKNDVVLIFAPNSIHVPVCFLGIVASGAIATTSNPLYTVSELSKQVKDSNPKLIVTVPELFEKVKGFNLPTILIGPNSEDSSPLKSRAKVLTFHDLVTLSGPVSDFPMVDFKQSDTAALLYSSGTTGMSKGVVLSHKNFIASSLMVTMEQDQAGEMHNVFLCFLPMFHVFGLAIITYAQLQRGNTVISMARFDLEKILKDVEKYKVTHLWVVPPVILALTKNSIVKKYDLSSLKHIGSGAAPLGKDLMEECAKIVPHGIVAQGYGMTETCGIVSVEDTRGGKRHTGSAGMLSSGVEAQIVSVDTLKPLPPNQLGEIWVRGPNMMQGYFNNPRATKLTIDKKGWVHTGDLGYFDEDGHLYVVDRIKELIKYKGFQVAPAELEGLLVSHPEILDAVVIPFPDADAGEVPVAYVVRSPNSSLTEDDVKKFIAGQVASFKRLRKVTFINSVPKSASGKILRRELIQKVRSNI</sequence>
<name>CCL7_HUMLU</name>
<protein>
    <recommendedName>
        <fullName evidence="7">Probable CoA ligase CCL7</fullName>
        <shortName evidence="5">HlCCL7</shortName>
        <ecNumber evidence="7">6.2.1.-</ecNumber>
    </recommendedName>
</protein>
<proteinExistence type="evidence at transcript level"/>
<reference key="1">
    <citation type="journal article" date="2013" name="Mol. Plant">
        <title>Characterization of the formation of branched short-chain fatty acid:CoAs for bitter acid biosynthesis in hop glandular trichomes.</title>
        <authorList>
            <person name="Xu H."/>
            <person name="Zhang F."/>
            <person name="Liu B."/>
            <person name="Huhman D.V."/>
            <person name="Sumner L.W."/>
            <person name="Dixon R.A."/>
            <person name="Wang G."/>
        </authorList>
    </citation>
    <scope>NUCLEOTIDE SEQUENCE [MRNA]</scope>
    <scope>TISSUE SPECIFICITY</scope>
    <scope>DEVELOPMENTAL STAGE</scope>
    <scope>GENE FAMILY</scope>
    <scope>NOMENCLATURE</scope>
    <source>
        <strain>cv. Nugget</strain>
    </source>
</reference>
<accession>M4IRL6</accession>
<organism>
    <name type="scientific">Humulus lupulus</name>
    <name type="common">European hop</name>
    <dbReference type="NCBI Taxonomy" id="3486"/>
    <lineage>
        <taxon>Eukaryota</taxon>
        <taxon>Viridiplantae</taxon>
        <taxon>Streptophyta</taxon>
        <taxon>Embryophyta</taxon>
        <taxon>Tracheophyta</taxon>
        <taxon>Spermatophyta</taxon>
        <taxon>Magnoliopsida</taxon>
        <taxon>eudicotyledons</taxon>
        <taxon>Gunneridae</taxon>
        <taxon>Pentapetalae</taxon>
        <taxon>rosids</taxon>
        <taxon>fabids</taxon>
        <taxon>Rosales</taxon>
        <taxon>Cannabaceae</taxon>
        <taxon>Humulus</taxon>
    </lineage>
</organism>
<evidence type="ECO:0000250" key="1">
    <source>
        <dbReference type="UniProtKB" id="M4IRL4"/>
    </source>
</evidence>
<evidence type="ECO:0000250" key="2">
    <source>
        <dbReference type="UniProtKB" id="Q42524"/>
    </source>
</evidence>
<evidence type="ECO:0000250" key="3">
    <source>
        <dbReference type="UniProtKB" id="Q81G39"/>
    </source>
</evidence>
<evidence type="ECO:0000269" key="4">
    <source>
    </source>
</evidence>
<evidence type="ECO:0000303" key="5">
    <source>
    </source>
</evidence>
<evidence type="ECO:0000305" key="6"/>
<evidence type="ECO:0000305" key="7">
    <source>
    </source>
</evidence>
<feature type="chain" id="PRO_0000452952" description="Probable CoA ligase CCL7">
    <location>
        <begin position="1"/>
        <end position="544"/>
    </location>
</feature>
<feature type="region of interest" description="SBD1" evidence="2">
    <location>
        <begin position="269"/>
        <end position="338"/>
    </location>
</feature>
<feature type="region of interest" description="SBD2" evidence="2">
    <location>
        <begin position="339"/>
        <end position="403"/>
    </location>
</feature>
<feature type="binding site" evidence="3">
    <location>
        <begin position="198"/>
        <end position="206"/>
    </location>
    <ligand>
        <name>ATP</name>
        <dbReference type="ChEBI" id="CHEBI:30616"/>
    </ligand>
</feature>
<feature type="binding site" evidence="3">
    <location>
        <begin position="338"/>
        <end position="343"/>
    </location>
    <ligand>
        <name>ATP</name>
        <dbReference type="ChEBI" id="CHEBI:30616"/>
    </ligand>
</feature>
<feature type="binding site" evidence="3">
    <location>
        <position position="424"/>
    </location>
    <ligand>
        <name>ATP</name>
        <dbReference type="ChEBI" id="CHEBI:30616"/>
    </ligand>
</feature>
<feature type="binding site" evidence="3">
    <location>
        <begin position="436"/>
        <end position="439"/>
    </location>
    <ligand>
        <name>ATP</name>
        <dbReference type="ChEBI" id="CHEBI:30616"/>
    </ligand>
</feature>
<feature type="binding site" evidence="3">
    <location>
        <position position="530"/>
    </location>
    <ligand>
        <name>ATP</name>
        <dbReference type="ChEBI" id="CHEBI:30616"/>
    </ligand>
</feature>
<comment type="subcellular location">
    <subcellularLocation>
        <location evidence="1">Cytoplasm</location>
        <location evidence="1">Cytosol</location>
    </subcellularLocation>
</comment>
<comment type="tissue specificity">
    <text evidence="4">Mostly expressed at low levels in glandular trichomes (lupulin glands) after flowering and in flowers, and, to a lower extent, in stems, leaves and cones.</text>
</comment>
<comment type="developmental stage">
    <text evidence="4">Accumulates progressively in glandular trichomes (lupulin glands) after flowering.</text>
</comment>
<comment type="domain">
    <text evidence="2">Both substrate-binding domains (SBD1 and SBD2) are involved in the substrate recognition, and are sufficient to confer the substrate specificity.</text>
</comment>
<comment type="similarity">
    <text evidence="6">Belongs to the ATP-dependent AMP-binding enzyme family.</text>
</comment>
<keyword id="KW-0067">ATP-binding</keyword>
<keyword id="KW-0963">Cytoplasm</keyword>
<keyword id="KW-0436">Ligase</keyword>
<keyword id="KW-0547">Nucleotide-binding</keyword>